<feature type="chain" id="PRO_0000151875" description="ATP phosphoribosyltransferase">
    <location>
        <begin position="1"/>
        <end position="304"/>
    </location>
</feature>
<keyword id="KW-0028">Amino-acid biosynthesis</keyword>
<keyword id="KW-0067">ATP-binding</keyword>
<keyword id="KW-0963">Cytoplasm</keyword>
<keyword id="KW-0328">Glycosyltransferase</keyword>
<keyword id="KW-0368">Histidine biosynthesis</keyword>
<keyword id="KW-0460">Magnesium</keyword>
<keyword id="KW-0479">Metal-binding</keyword>
<keyword id="KW-0547">Nucleotide-binding</keyword>
<keyword id="KW-0808">Transferase</keyword>
<proteinExistence type="inferred from homology"/>
<accession>Q9PBC4</accession>
<dbReference type="EC" id="2.4.2.17" evidence="1"/>
<dbReference type="EMBL" id="AE003849">
    <property type="protein sequence ID" value="AAF85019.1"/>
    <property type="molecule type" value="Genomic_DNA"/>
</dbReference>
<dbReference type="PIR" id="G82585">
    <property type="entry name" value="G82585"/>
</dbReference>
<dbReference type="RefSeq" id="WP_010894668.1">
    <property type="nucleotide sequence ID" value="NC_002488.3"/>
</dbReference>
<dbReference type="SMR" id="Q9PBC4"/>
<dbReference type="STRING" id="160492.XF_2220"/>
<dbReference type="KEGG" id="xfa:XF_2220"/>
<dbReference type="PATRIC" id="fig|160492.11.peg.2362"/>
<dbReference type="eggNOG" id="COG0040">
    <property type="taxonomic scope" value="Bacteria"/>
</dbReference>
<dbReference type="HOGENOM" id="CLU_038115_1_0_6"/>
<dbReference type="UniPathway" id="UPA00031">
    <property type="reaction ID" value="UER00006"/>
</dbReference>
<dbReference type="Proteomes" id="UP000000812">
    <property type="component" value="Chromosome"/>
</dbReference>
<dbReference type="GO" id="GO:0005737">
    <property type="term" value="C:cytoplasm"/>
    <property type="evidence" value="ECO:0007669"/>
    <property type="project" value="UniProtKB-SubCell"/>
</dbReference>
<dbReference type="GO" id="GO:0005524">
    <property type="term" value="F:ATP binding"/>
    <property type="evidence" value="ECO:0007669"/>
    <property type="project" value="UniProtKB-KW"/>
</dbReference>
<dbReference type="GO" id="GO:0003879">
    <property type="term" value="F:ATP phosphoribosyltransferase activity"/>
    <property type="evidence" value="ECO:0007669"/>
    <property type="project" value="UniProtKB-UniRule"/>
</dbReference>
<dbReference type="GO" id="GO:0000287">
    <property type="term" value="F:magnesium ion binding"/>
    <property type="evidence" value="ECO:0007669"/>
    <property type="project" value="UniProtKB-UniRule"/>
</dbReference>
<dbReference type="GO" id="GO:0000105">
    <property type="term" value="P:L-histidine biosynthetic process"/>
    <property type="evidence" value="ECO:0007669"/>
    <property type="project" value="UniProtKB-UniRule"/>
</dbReference>
<dbReference type="FunFam" id="3.40.190.10:FF:000008">
    <property type="entry name" value="ATP phosphoribosyltransferase"/>
    <property type="match status" value="1"/>
</dbReference>
<dbReference type="Gene3D" id="3.30.70.120">
    <property type="match status" value="1"/>
</dbReference>
<dbReference type="Gene3D" id="3.40.190.10">
    <property type="entry name" value="Periplasmic binding protein-like II"/>
    <property type="match status" value="2"/>
</dbReference>
<dbReference type="HAMAP" id="MF_00079">
    <property type="entry name" value="HisG_Long"/>
    <property type="match status" value="1"/>
</dbReference>
<dbReference type="InterPro" id="IPR020621">
    <property type="entry name" value="ATP-PRT_HisG_long"/>
</dbReference>
<dbReference type="InterPro" id="IPR013820">
    <property type="entry name" value="ATP_PRibTrfase_cat"/>
</dbReference>
<dbReference type="InterPro" id="IPR018198">
    <property type="entry name" value="ATP_PRibTrfase_CS"/>
</dbReference>
<dbReference type="InterPro" id="IPR001348">
    <property type="entry name" value="ATP_PRibTrfase_HisG"/>
</dbReference>
<dbReference type="InterPro" id="IPR013115">
    <property type="entry name" value="HisG_C"/>
</dbReference>
<dbReference type="InterPro" id="IPR015867">
    <property type="entry name" value="N-reg_PII/ATP_PRibTrfase_C"/>
</dbReference>
<dbReference type="NCBIfam" id="TIGR00070">
    <property type="entry name" value="hisG"/>
    <property type="match status" value="1"/>
</dbReference>
<dbReference type="NCBIfam" id="TIGR03455">
    <property type="entry name" value="HisG_C-term"/>
    <property type="match status" value="1"/>
</dbReference>
<dbReference type="PANTHER" id="PTHR21403:SF8">
    <property type="entry name" value="ATP PHOSPHORIBOSYLTRANSFERASE"/>
    <property type="match status" value="1"/>
</dbReference>
<dbReference type="PANTHER" id="PTHR21403">
    <property type="entry name" value="ATP PHOSPHORIBOSYLTRANSFERASE ATP-PRTASE"/>
    <property type="match status" value="1"/>
</dbReference>
<dbReference type="Pfam" id="PF01634">
    <property type="entry name" value="HisG"/>
    <property type="match status" value="1"/>
</dbReference>
<dbReference type="SUPFAM" id="SSF53850">
    <property type="entry name" value="Periplasmic binding protein-like II"/>
    <property type="match status" value="1"/>
</dbReference>
<dbReference type="PROSITE" id="PS01316">
    <property type="entry name" value="ATP_P_PHORIBOSYLTR"/>
    <property type="match status" value="1"/>
</dbReference>
<organism>
    <name type="scientific">Xylella fastidiosa (strain 9a5c)</name>
    <dbReference type="NCBI Taxonomy" id="160492"/>
    <lineage>
        <taxon>Bacteria</taxon>
        <taxon>Pseudomonadati</taxon>
        <taxon>Pseudomonadota</taxon>
        <taxon>Gammaproteobacteria</taxon>
        <taxon>Lysobacterales</taxon>
        <taxon>Lysobacteraceae</taxon>
        <taxon>Xylella</taxon>
    </lineage>
</organism>
<sequence length="304" mass="33533">MSASTALPVRDRLRIAIQKSGRLTEPARRLLTACGLSWRQSRDKLFCYGESLPVDLLLVRDDDIPGLIAQGVCDLGIVGRNELDEQAASRRRNGLPVPYQTLRGLHFGQCRLMLAVPEEWEWQDISQLTGKRIATSYPAILTDWLQTHHIAAQIVELSGSVEIAPRLGTADLICDLVSSGATLAAHQLKPVIQIMESQAVLAGMIRQPADARAGLLAMLLRRMDGLLTLRDSNLLMFRAFQEHLDALTHLLPDADPLVQLPDDGSGTLRVQTMCHGTITWQRLEELERAGAQGLMVLTVERSLA</sequence>
<reference key="1">
    <citation type="journal article" date="2000" name="Nature">
        <title>The genome sequence of the plant pathogen Xylella fastidiosa.</title>
        <authorList>
            <person name="Simpson A.J.G."/>
            <person name="Reinach F.C."/>
            <person name="Arruda P."/>
            <person name="Abreu F.A."/>
            <person name="Acencio M."/>
            <person name="Alvarenga R."/>
            <person name="Alves L.M.C."/>
            <person name="Araya J.E."/>
            <person name="Baia G.S."/>
            <person name="Baptista C.S."/>
            <person name="Barros M.H."/>
            <person name="Bonaccorsi E.D."/>
            <person name="Bordin S."/>
            <person name="Bove J.M."/>
            <person name="Briones M.R.S."/>
            <person name="Bueno M.R.P."/>
            <person name="Camargo A.A."/>
            <person name="Camargo L.E.A."/>
            <person name="Carraro D.M."/>
            <person name="Carrer H."/>
            <person name="Colauto N.B."/>
            <person name="Colombo C."/>
            <person name="Costa F.F."/>
            <person name="Costa M.C.R."/>
            <person name="Costa-Neto C.M."/>
            <person name="Coutinho L.L."/>
            <person name="Cristofani M."/>
            <person name="Dias-Neto E."/>
            <person name="Docena C."/>
            <person name="El-Dorry H."/>
            <person name="Facincani A.P."/>
            <person name="Ferreira A.J.S."/>
            <person name="Ferreira V.C.A."/>
            <person name="Ferro J.A."/>
            <person name="Fraga J.S."/>
            <person name="Franca S.C."/>
            <person name="Franco M.C."/>
            <person name="Frohme M."/>
            <person name="Furlan L.R."/>
            <person name="Garnier M."/>
            <person name="Goldman G.H."/>
            <person name="Goldman M.H.S."/>
            <person name="Gomes S.L."/>
            <person name="Gruber A."/>
            <person name="Ho P.L."/>
            <person name="Hoheisel J.D."/>
            <person name="Junqueira M.L."/>
            <person name="Kemper E.L."/>
            <person name="Kitajima J.P."/>
            <person name="Krieger J.E."/>
            <person name="Kuramae E.E."/>
            <person name="Laigret F."/>
            <person name="Lambais M.R."/>
            <person name="Leite L.C.C."/>
            <person name="Lemos E.G.M."/>
            <person name="Lemos M.V.F."/>
            <person name="Lopes S.A."/>
            <person name="Lopes C.R."/>
            <person name="Machado J.A."/>
            <person name="Machado M.A."/>
            <person name="Madeira A.M.B.N."/>
            <person name="Madeira H.M.F."/>
            <person name="Marino C.L."/>
            <person name="Marques M.V."/>
            <person name="Martins E.A.L."/>
            <person name="Martins E.M.F."/>
            <person name="Matsukuma A.Y."/>
            <person name="Menck C.F.M."/>
            <person name="Miracca E.C."/>
            <person name="Miyaki C.Y."/>
            <person name="Monteiro-Vitorello C.B."/>
            <person name="Moon D.H."/>
            <person name="Nagai M.A."/>
            <person name="Nascimento A.L.T.O."/>
            <person name="Netto L.E.S."/>
            <person name="Nhani A. Jr."/>
            <person name="Nobrega F.G."/>
            <person name="Nunes L.R."/>
            <person name="Oliveira M.A."/>
            <person name="de Oliveira M.C."/>
            <person name="de Oliveira R.C."/>
            <person name="Palmieri D.A."/>
            <person name="Paris A."/>
            <person name="Peixoto B.R."/>
            <person name="Pereira G.A.G."/>
            <person name="Pereira H.A. Jr."/>
            <person name="Pesquero J.B."/>
            <person name="Quaggio R.B."/>
            <person name="Roberto P.G."/>
            <person name="Rodrigues V."/>
            <person name="de Rosa A.J.M."/>
            <person name="de Rosa V.E. Jr."/>
            <person name="de Sa R.G."/>
            <person name="Santelli R.V."/>
            <person name="Sawasaki H.E."/>
            <person name="da Silva A.C.R."/>
            <person name="da Silva A.M."/>
            <person name="da Silva F.R."/>
            <person name="Silva W.A. Jr."/>
            <person name="da Silveira J.F."/>
            <person name="Silvestri M.L.Z."/>
            <person name="Siqueira W.J."/>
            <person name="de Souza A.A."/>
            <person name="de Souza A.P."/>
            <person name="Terenzi M.F."/>
            <person name="Truffi D."/>
            <person name="Tsai S.M."/>
            <person name="Tsuhako M.H."/>
            <person name="Vallada H."/>
            <person name="Van Sluys M.A."/>
            <person name="Verjovski-Almeida S."/>
            <person name="Vettore A.L."/>
            <person name="Zago M.A."/>
            <person name="Zatz M."/>
            <person name="Meidanis J."/>
            <person name="Setubal J.C."/>
        </authorList>
    </citation>
    <scope>NUCLEOTIDE SEQUENCE [LARGE SCALE GENOMIC DNA]</scope>
    <source>
        <strain>9a5c</strain>
    </source>
</reference>
<comment type="function">
    <text evidence="1">Catalyzes the condensation of ATP and 5-phosphoribose 1-diphosphate to form N'-(5'-phosphoribosyl)-ATP (PR-ATP). Has a crucial role in the pathway because the rate of histidine biosynthesis seems to be controlled primarily by regulation of HisG enzymatic activity.</text>
</comment>
<comment type="catalytic activity">
    <reaction evidence="1">
        <text>1-(5-phospho-beta-D-ribosyl)-ATP + diphosphate = 5-phospho-alpha-D-ribose 1-diphosphate + ATP</text>
        <dbReference type="Rhea" id="RHEA:18473"/>
        <dbReference type="ChEBI" id="CHEBI:30616"/>
        <dbReference type="ChEBI" id="CHEBI:33019"/>
        <dbReference type="ChEBI" id="CHEBI:58017"/>
        <dbReference type="ChEBI" id="CHEBI:73183"/>
        <dbReference type="EC" id="2.4.2.17"/>
    </reaction>
</comment>
<comment type="cofactor">
    <cofactor evidence="1">
        <name>Mg(2+)</name>
        <dbReference type="ChEBI" id="CHEBI:18420"/>
    </cofactor>
</comment>
<comment type="activity regulation">
    <text evidence="1">Feedback inhibited by histidine.</text>
</comment>
<comment type="pathway">
    <text evidence="1">Amino-acid biosynthesis; L-histidine biosynthesis; L-histidine from 5-phospho-alpha-D-ribose 1-diphosphate: step 1/9.</text>
</comment>
<comment type="subcellular location">
    <subcellularLocation>
        <location evidence="1">Cytoplasm</location>
    </subcellularLocation>
</comment>
<comment type="similarity">
    <text evidence="1">Belongs to the ATP phosphoribosyltransferase family. Long subfamily.</text>
</comment>
<name>HIS1_XYLFA</name>
<gene>
    <name evidence="1" type="primary">hisG</name>
    <name type="ordered locus">XF_2220</name>
</gene>
<evidence type="ECO:0000255" key="1">
    <source>
        <dbReference type="HAMAP-Rule" id="MF_00079"/>
    </source>
</evidence>
<protein>
    <recommendedName>
        <fullName evidence="1">ATP phosphoribosyltransferase</fullName>
        <shortName evidence="1">ATP-PRT</shortName>
        <shortName evidence="1">ATP-PRTase</shortName>
        <ecNumber evidence="1">2.4.2.17</ecNumber>
    </recommendedName>
</protein>